<protein>
    <recommendedName>
        <fullName evidence="2">N(4)-acetylcytidine amidohydrolase</fullName>
        <shortName evidence="2">ac4C amidohydrolase</shortName>
        <ecNumber evidence="2">3.5.1.135</ecNumber>
    </recommendedName>
</protein>
<accession>A8APA8</accession>
<evidence type="ECO:0000255" key="1"/>
<evidence type="ECO:0000255" key="2">
    <source>
        <dbReference type="HAMAP-Rule" id="MF_00684"/>
    </source>
</evidence>
<comment type="function">
    <text evidence="2">Catalyzes the hydrolysis of N(4)-acetylcytidine (ac4C).</text>
</comment>
<comment type="catalytic activity">
    <reaction evidence="2">
        <text>N(4)-acetylcytidine + H2O = cytidine + acetate + H(+)</text>
        <dbReference type="Rhea" id="RHEA:62932"/>
        <dbReference type="ChEBI" id="CHEBI:15377"/>
        <dbReference type="ChEBI" id="CHEBI:15378"/>
        <dbReference type="ChEBI" id="CHEBI:17562"/>
        <dbReference type="ChEBI" id="CHEBI:30089"/>
        <dbReference type="ChEBI" id="CHEBI:70989"/>
        <dbReference type="EC" id="3.5.1.135"/>
    </reaction>
</comment>
<comment type="catalytic activity">
    <reaction evidence="2">
        <text>N(4)-acetyl-2'-deoxycytidine + H2O = 2'-deoxycytidine + acetate + H(+)</text>
        <dbReference type="Rhea" id="RHEA:62936"/>
        <dbReference type="ChEBI" id="CHEBI:15377"/>
        <dbReference type="ChEBI" id="CHEBI:15378"/>
        <dbReference type="ChEBI" id="CHEBI:15698"/>
        <dbReference type="ChEBI" id="CHEBI:30089"/>
        <dbReference type="ChEBI" id="CHEBI:146133"/>
        <dbReference type="EC" id="3.5.1.135"/>
    </reaction>
</comment>
<comment type="catalytic activity">
    <reaction evidence="2">
        <text>N(4)-acetylcytosine + H2O = cytosine + acetate + H(+)</text>
        <dbReference type="Rhea" id="RHEA:62940"/>
        <dbReference type="ChEBI" id="CHEBI:15377"/>
        <dbReference type="ChEBI" id="CHEBI:15378"/>
        <dbReference type="ChEBI" id="CHEBI:16040"/>
        <dbReference type="ChEBI" id="CHEBI:30089"/>
        <dbReference type="ChEBI" id="CHEBI:146134"/>
        <dbReference type="EC" id="3.5.1.135"/>
    </reaction>
</comment>
<comment type="similarity">
    <text evidence="2">Belongs to the N(4)-acetylcytidine amidohydrolase family.</text>
</comment>
<reference key="1">
    <citation type="submission" date="2007-08" db="EMBL/GenBank/DDBJ databases">
        <authorList>
            <consortium name="The Citrobacter koseri Genome Sequencing Project"/>
            <person name="McClelland M."/>
            <person name="Sanderson E.K."/>
            <person name="Porwollik S."/>
            <person name="Spieth J."/>
            <person name="Clifton W.S."/>
            <person name="Latreille P."/>
            <person name="Courtney L."/>
            <person name="Wang C."/>
            <person name="Pepin K."/>
            <person name="Bhonagiri V."/>
            <person name="Nash W."/>
            <person name="Johnson M."/>
            <person name="Thiruvilangam P."/>
            <person name="Wilson R."/>
        </authorList>
    </citation>
    <scope>NUCLEOTIDE SEQUENCE [LARGE SCALE GENOMIC DNA]</scope>
    <source>
        <strain>ATCC BAA-895 / CDC 4225-83 / SGSC4696</strain>
    </source>
</reference>
<organism>
    <name type="scientific">Citrobacter koseri (strain ATCC BAA-895 / CDC 4225-83 / SGSC4696)</name>
    <dbReference type="NCBI Taxonomy" id="290338"/>
    <lineage>
        <taxon>Bacteria</taxon>
        <taxon>Pseudomonadati</taxon>
        <taxon>Pseudomonadota</taxon>
        <taxon>Gammaproteobacteria</taxon>
        <taxon>Enterobacterales</taxon>
        <taxon>Enterobacteriaceae</taxon>
        <taxon>Citrobacter</taxon>
    </lineage>
</organism>
<name>AC4CH_CITK8</name>
<gene>
    <name type="ordered locus">CKO_04263</name>
</gene>
<feature type="chain" id="PRO_1000044944" description="N(4)-acetylcytidine amidohydrolase">
    <location>
        <begin position="1"/>
        <end position="103"/>
    </location>
</feature>
<feature type="domain" description="ASCH" evidence="1">
    <location>
        <begin position="6"/>
        <end position="94"/>
    </location>
</feature>
<feature type="active site" description="Proton acceptor" evidence="2">
    <location>
        <position position="21"/>
    </location>
</feature>
<feature type="active site" description="Nucleophile" evidence="2">
    <location>
        <position position="24"/>
    </location>
</feature>
<feature type="active site" description="Proton donor" evidence="2">
    <location>
        <position position="74"/>
    </location>
</feature>
<dbReference type="EC" id="3.5.1.135" evidence="2"/>
<dbReference type="EMBL" id="CP000822">
    <property type="protein sequence ID" value="ABV15321.1"/>
    <property type="molecule type" value="Genomic_DNA"/>
</dbReference>
<dbReference type="SMR" id="A8APA8"/>
<dbReference type="STRING" id="290338.CKO_04263"/>
<dbReference type="GeneID" id="45137865"/>
<dbReference type="KEGG" id="cko:CKO_04263"/>
<dbReference type="HOGENOM" id="CLU_152586_0_0_6"/>
<dbReference type="OrthoDB" id="8590202at2"/>
<dbReference type="Proteomes" id="UP000008148">
    <property type="component" value="Chromosome"/>
</dbReference>
<dbReference type="GO" id="GO:0005829">
    <property type="term" value="C:cytosol"/>
    <property type="evidence" value="ECO:0007669"/>
    <property type="project" value="TreeGrafter"/>
</dbReference>
<dbReference type="GO" id="GO:0016813">
    <property type="term" value="F:hydrolase activity, acting on carbon-nitrogen (but not peptide) bonds, in linear amidines"/>
    <property type="evidence" value="ECO:0007669"/>
    <property type="project" value="UniProtKB-UniRule"/>
</dbReference>
<dbReference type="GO" id="GO:0106251">
    <property type="term" value="F:N4-acetylcytidine amidohydrolase activity"/>
    <property type="evidence" value="ECO:0007669"/>
    <property type="project" value="RHEA"/>
</dbReference>
<dbReference type="CDD" id="cd06552">
    <property type="entry name" value="ASCH_yqfb_like"/>
    <property type="match status" value="1"/>
</dbReference>
<dbReference type="FunFam" id="2.30.130.30:FF:000001">
    <property type="entry name" value="UPF0267 protein YqfB"/>
    <property type="match status" value="1"/>
</dbReference>
<dbReference type="Gene3D" id="2.30.130.30">
    <property type="entry name" value="Hypothetical protein"/>
    <property type="match status" value="1"/>
</dbReference>
<dbReference type="HAMAP" id="MF_00684">
    <property type="entry name" value="ac4C_amidohydr"/>
    <property type="match status" value="1"/>
</dbReference>
<dbReference type="InterPro" id="IPR008314">
    <property type="entry name" value="AC4CH"/>
</dbReference>
<dbReference type="InterPro" id="IPR007374">
    <property type="entry name" value="ASCH_domain"/>
</dbReference>
<dbReference type="InterPro" id="IPR015947">
    <property type="entry name" value="PUA-like_sf"/>
</dbReference>
<dbReference type="NCBIfam" id="NF003443">
    <property type="entry name" value="PRK04980.1"/>
    <property type="match status" value="1"/>
</dbReference>
<dbReference type="PANTHER" id="PTHR38088">
    <property type="entry name" value="UCP029143 FAMILY PROTEIN"/>
    <property type="match status" value="1"/>
</dbReference>
<dbReference type="PANTHER" id="PTHR38088:SF2">
    <property type="entry name" value="UCP029143 FAMILY PROTEIN"/>
    <property type="match status" value="1"/>
</dbReference>
<dbReference type="Pfam" id="PF04266">
    <property type="entry name" value="ASCH"/>
    <property type="match status" value="1"/>
</dbReference>
<dbReference type="PIRSF" id="PIRSF029143">
    <property type="entry name" value="UCP029143"/>
    <property type="match status" value="1"/>
</dbReference>
<dbReference type="SMART" id="SM01022">
    <property type="entry name" value="ASCH"/>
    <property type="match status" value="1"/>
</dbReference>
<dbReference type="SUPFAM" id="SSF88697">
    <property type="entry name" value="PUA domain-like"/>
    <property type="match status" value="1"/>
</dbReference>
<sequence>MQPNDITFFQRFQDDILAGRKTITIRDESESHFKVGDILRVGRFEDEGYFCTIEVVGTSTVTLETLTEKHARQENMTLEELKHVIAGIYPDQTQFYVIDFKCL</sequence>
<keyword id="KW-0378">Hydrolase</keyword>
<keyword id="KW-1185">Reference proteome</keyword>
<proteinExistence type="inferred from homology"/>